<sequence length="402" mass="46405">MAETSEEVAVLVQRVVKDITNAFRRNPHIDEIGLIPCPEARYNRSPIVLVENKLGVESWCVKFLLPYVHNKLLLYRTRKQWLNRDELIDVTCTLLLLNPDFTTAWNVRKELILSGTLNPIKDLHLGKLALTKFPKSPETWIHRRWVLQQLIQETSLPSFVTKGNLGTIPTERAQRLIQEEMEVCGEAAGRYPSNYNAWSHRIWVLQHLAKLDVKILLDELSSTKHWASMHVSDHSGFHYRQFLLKSLISQTVIDSSVMEQNPLRSEPALVPPKDEEAAVSTEEPRINLPHLLEEEVEFSTDLIDSYPGHETLWCHRRHIFYLQHHLNAGSQLSQAMEVDGLNDSSKQGYSQETKRLKRTPVPDSLGLEMEHRFIDQVLSTCRNVEQARFASAYRKWLVTLSQ</sequence>
<comment type="similarity">
    <text evidence="2">Belongs to the protein prenyltransferase subunit alpha family.</text>
</comment>
<comment type="sequence caution" evidence="2">
    <conflict type="erroneous initiation">
        <sequence resource="EMBL-CDS" id="AAH53622"/>
    </conflict>
</comment>
<organism>
    <name type="scientific">Homo sapiens</name>
    <name type="common">Human</name>
    <dbReference type="NCBI Taxonomy" id="9606"/>
    <lineage>
        <taxon>Eukaryota</taxon>
        <taxon>Metazoa</taxon>
        <taxon>Chordata</taxon>
        <taxon>Craniata</taxon>
        <taxon>Vertebrata</taxon>
        <taxon>Euteleostomi</taxon>
        <taxon>Mammalia</taxon>
        <taxon>Eutheria</taxon>
        <taxon>Euarchontoglires</taxon>
        <taxon>Primates</taxon>
        <taxon>Haplorrhini</taxon>
        <taxon>Catarrhini</taxon>
        <taxon>Hominidae</taxon>
        <taxon>Homo</taxon>
    </lineage>
</organism>
<proteinExistence type="evidence at protein level"/>
<reference key="1">
    <citation type="journal article" date="2004" name="Nature">
        <title>DNA sequence and analysis of human chromosome 9.</title>
        <authorList>
            <person name="Humphray S.J."/>
            <person name="Oliver K."/>
            <person name="Hunt A.R."/>
            <person name="Plumb R.W."/>
            <person name="Loveland J.E."/>
            <person name="Howe K.L."/>
            <person name="Andrews T.D."/>
            <person name="Searle S."/>
            <person name="Hunt S.E."/>
            <person name="Scott C.E."/>
            <person name="Jones M.C."/>
            <person name="Ainscough R."/>
            <person name="Almeida J.P."/>
            <person name="Ambrose K.D."/>
            <person name="Ashwell R.I.S."/>
            <person name="Babbage A.K."/>
            <person name="Babbage S."/>
            <person name="Bagguley C.L."/>
            <person name="Bailey J."/>
            <person name="Banerjee R."/>
            <person name="Barker D.J."/>
            <person name="Barlow K.F."/>
            <person name="Bates K."/>
            <person name="Beasley H."/>
            <person name="Beasley O."/>
            <person name="Bird C.P."/>
            <person name="Bray-Allen S."/>
            <person name="Brown A.J."/>
            <person name="Brown J.Y."/>
            <person name="Burford D."/>
            <person name="Burrill W."/>
            <person name="Burton J."/>
            <person name="Carder C."/>
            <person name="Carter N.P."/>
            <person name="Chapman J.C."/>
            <person name="Chen Y."/>
            <person name="Clarke G."/>
            <person name="Clark S.Y."/>
            <person name="Clee C.M."/>
            <person name="Clegg S."/>
            <person name="Collier R.E."/>
            <person name="Corby N."/>
            <person name="Crosier M."/>
            <person name="Cummings A.T."/>
            <person name="Davies J."/>
            <person name="Dhami P."/>
            <person name="Dunn M."/>
            <person name="Dutta I."/>
            <person name="Dyer L.W."/>
            <person name="Earthrowl M.E."/>
            <person name="Faulkner L."/>
            <person name="Fleming C.J."/>
            <person name="Frankish A."/>
            <person name="Frankland J.A."/>
            <person name="French L."/>
            <person name="Fricker D.G."/>
            <person name="Garner P."/>
            <person name="Garnett J."/>
            <person name="Ghori J."/>
            <person name="Gilbert J.G.R."/>
            <person name="Glison C."/>
            <person name="Grafham D.V."/>
            <person name="Gribble S."/>
            <person name="Griffiths C."/>
            <person name="Griffiths-Jones S."/>
            <person name="Grocock R."/>
            <person name="Guy J."/>
            <person name="Hall R.E."/>
            <person name="Hammond S."/>
            <person name="Harley J.L."/>
            <person name="Harrison E.S.I."/>
            <person name="Hart E.A."/>
            <person name="Heath P.D."/>
            <person name="Henderson C.D."/>
            <person name="Hopkins B.L."/>
            <person name="Howard P.J."/>
            <person name="Howden P.J."/>
            <person name="Huckle E."/>
            <person name="Johnson C."/>
            <person name="Johnson D."/>
            <person name="Joy A.A."/>
            <person name="Kay M."/>
            <person name="Keenan S."/>
            <person name="Kershaw J.K."/>
            <person name="Kimberley A.M."/>
            <person name="King A."/>
            <person name="Knights A."/>
            <person name="Laird G.K."/>
            <person name="Langford C."/>
            <person name="Lawlor S."/>
            <person name="Leongamornlert D.A."/>
            <person name="Leversha M."/>
            <person name="Lloyd C."/>
            <person name="Lloyd D.M."/>
            <person name="Lovell J."/>
            <person name="Martin S."/>
            <person name="Mashreghi-Mohammadi M."/>
            <person name="Matthews L."/>
            <person name="McLaren S."/>
            <person name="McLay K.E."/>
            <person name="McMurray A."/>
            <person name="Milne S."/>
            <person name="Nickerson T."/>
            <person name="Nisbett J."/>
            <person name="Nordsiek G."/>
            <person name="Pearce A.V."/>
            <person name="Peck A.I."/>
            <person name="Porter K.M."/>
            <person name="Pandian R."/>
            <person name="Pelan S."/>
            <person name="Phillimore B."/>
            <person name="Povey S."/>
            <person name="Ramsey Y."/>
            <person name="Rand V."/>
            <person name="Scharfe M."/>
            <person name="Sehra H.K."/>
            <person name="Shownkeen R."/>
            <person name="Sims S.K."/>
            <person name="Skuce C.D."/>
            <person name="Smith M."/>
            <person name="Steward C.A."/>
            <person name="Swarbreck D."/>
            <person name="Sycamore N."/>
            <person name="Tester J."/>
            <person name="Thorpe A."/>
            <person name="Tracey A."/>
            <person name="Tromans A."/>
            <person name="Thomas D.W."/>
            <person name="Wall M."/>
            <person name="Wallis J.M."/>
            <person name="West A.P."/>
            <person name="Whitehead S.L."/>
            <person name="Willey D.L."/>
            <person name="Williams S.A."/>
            <person name="Wilming L."/>
            <person name="Wray P.W."/>
            <person name="Young L."/>
            <person name="Ashurst J.L."/>
            <person name="Coulson A."/>
            <person name="Blocker H."/>
            <person name="Durbin R.M."/>
            <person name="Sulston J.E."/>
            <person name="Hubbard T."/>
            <person name="Jackson M.J."/>
            <person name="Bentley D.R."/>
            <person name="Beck S."/>
            <person name="Rogers J."/>
            <person name="Dunham I."/>
        </authorList>
    </citation>
    <scope>NUCLEOTIDE SEQUENCE [LARGE SCALE GENOMIC DNA]</scope>
</reference>
<reference key="2">
    <citation type="journal article" date="2004" name="Genome Res.">
        <title>The status, quality, and expansion of the NIH full-length cDNA project: the Mammalian Gene Collection (MGC).</title>
        <authorList>
            <consortium name="The MGC Project Team"/>
        </authorList>
    </citation>
    <scope>NUCLEOTIDE SEQUENCE [LARGE SCALE MRNA]</scope>
    <source>
        <tissue>Skin</tissue>
    </source>
</reference>
<reference key="3">
    <citation type="journal article" date="2012" name="Proc. Natl. Acad. Sci. U.S.A.">
        <title>N-terminal acetylome analyses and functional insights of the N-terminal acetyltransferase NatB.</title>
        <authorList>
            <person name="Van Damme P."/>
            <person name="Lasa M."/>
            <person name="Polevoda B."/>
            <person name="Gazquez C."/>
            <person name="Elosegui-Artola A."/>
            <person name="Kim D.S."/>
            <person name="De Juan-Pardo E."/>
            <person name="Demeyer K."/>
            <person name="Hole K."/>
            <person name="Larrea E."/>
            <person name="Timmerman E."/>
            <person name="Prieto J."/>
            <person name="Arnesen T."/>
            <person name="Sherman F."/>
            <person name="Gevaert K."/>
            <person name="Aldabe R."/>
        </authorList>
    </citation>
    <scope>ACETYLATION [LARGE SCALE ANALYSIS] AT ALA-2</scope>
    <scope>CLEAVAGE OF INITIATOR METHIONINE [LARGE SCALE ANALYSIS]</scope>
    <scope>IDENTIFICATION BY MASS SPECTROMETRY [LARGE SCALE ANALYSIS]</scope>
</reference>
<evidence type="ECO:0000256" key="1">
    <source>
        <dbReference type="SAM" id="MobiDB-lite"/>
    </source>
</evidence>
<evidence type="ECO:0000305" key="2"/>
<evidence type="ECO:0007744" key="3">
    <source>
    </source>
</evidence>
<evidence type="ECO:0007829" key="4">
    <source>
        <dbReference type="PDB" id="6J7F"/>
    </source>
</evidence>
<evidence type="ECO:0007829" key="5">
    <source>
        <dbReference type="PDB" id="6J7X"/>
    </source>
</evidence>
<evidence type="ECO:0007829" key="6">
    <source>
        <dbReference type="PDB" id="6O60"/>
    </source>
</evidence>
<name>PTAR1_HUMAN</name>
<keyword id="KW-0002">3D-structure</keyword>
<keyword id="KW-0007">Acetylation</keyword>
<keyword id="KW-0637">Prenyltransferase</keyword>
<keyword id="KW-1267">Proteomics identification</keyword>
<keyword id="KW-1185">Reference proteome</keyword>
<keyword id="KW-0677">Repeat</keyword>
<keyword id="KW-0808">Transferase</keyword>
<accession>Q7Z6K3</accession>
<accession>Q5T7V5</accession>
<accession>Q5T7V6</accession>
<feature type="initiator methionine" description="Removed" evidence="3">
    <location>
        <position position="1"/>
    </location>
</feature>
<feature type="chain" id="PRO_0000316843" description="Protein prenyltransferase alpha subunit repeat-containing protein 1">
    <location>
        <begin position="2"/>
        <end position="402"/>
    </location>
</feature>
<feature type="repeat" description="PFTA 1">
    <location>
        <begin position="87"/>
        <end position="120"/>
    </location>
</feature>
<feature type="repeat" description="PFTA 2">
    <location>
        <begin position="122"/>
        <end position="155"/>
    </location>
</feature>
<feature type="repeat" description="PFTA 3">
    <location>
        <begin position="180"/>
        <end position="213"/>
    </location>
</feature>
<feature type="repeat" description="PFTA 4">
    <location>
        <begin position="219"/>
        <end position="252"/>
    </location>
</feature>
<feature type="repeat" description="PFTA 5">
    <location>
        <begin position="295"/>
        <end position="328"/>
    </location>
</feature>
<feature type="region of interest" description="Disordered" evidence="1">
    <location>
        <begin position="263"/>
        <end position="282"/>
    </location>
</feature>
<feature type="modified residue" description="N-acetylalanine" evidence="3">
    <location>
        <position position="2"/>
    </location>
</feature>
<feature type="helix" evidence="6">
    <location>
        <begin position="7"/>
        <end position="25"/>
    </location>
</feature>
<feature type="strand" evidence="6">
    <location>
        <begin position="31"/>
        <end position="35"/>
    </location>
</feature>
<feature type="strand" evidence="6">
    <location>
        <begin position="42"/>
        <end position="44"/>
    </location>
</feature>
<feature type="strand" evidence="6">
    <location>
        <begin position="46"/>
        <end position="50"/>
    </location>
</feature>
<feature type="strand" evidence="6">
    <location>
        <begin position="53"/>
        <end position="57"/>
    </location>
</feature>
<feature type="helix" evidence="6">
    <location>
        <begin position="58"/>
        <end position="60"/>
    </location>
</feature>
<feature type="helix" evidence="6">
    <location>
        <begin position="61"/>
        <end position="76"/>
    </location>
</feature>
<feature type="helix" evidence="6">
    <location>
        <begin position="84"/>
        <end position="97"/>
    </location>
</feature>
<feature type="helix" evidence="6">
    <location>
        <begin position="102"/>
        <end position="113"/>
    </location>
</feature>
<feature type="helix" evidence="6">
    <location>
        <begin position="119"/>
        <end position="132"/>
    </location>
</feature>
<feature type="helix" evidence="6">
    <location>
        <begin position="137"/>
        <end position="149"/>
    </location>
</feature>
<feature type="turn" evidence="4">
    <location>
        <begin position="150"/>
        <end position="153"/>
    </location>
</feature>
<feature type="helix" evidence="6">
    <location>
        <begin position="172"/>
        <end position="190"/>
    </location>
</feature>
<feature type="helix" evidence="6">
    <location>
        <begin position="195"/>
        <end position="207"/>
    </location>
</feature>
<feature type="strand" evidence="4">
    <location>
        <begin position="209"/>
        <end position="211"/>
    </location>
</feature>
<feature type="helix" evidence="6">
    <location>
        <begin position="213"/>
        <end position="229"/>
    </location>
</feature>
<feature type="helix" evidence="6">
    <location>
        <begin position="234"/>
        <end position="248"/>
    </location>
</feature>
<feature type="turn" evidence="4">
    <location>
        <begin position="281"/>
        <end position="283"/>
    </location>
</feature>
<feature type="turn" evidence="5">
    <location>
        <begin position="284"/>
        <end position="286"/>
    </location>
</feature>
<feature type="helix" evidence="6">
    <location>
        <begin position="290"/>
        <end position="305"/>
    </location>
</feature>
<feature type="helix" evidence="6">
    <location>
        <begin position="310"/>
        <end position="323"/>
    </location>
</feature>
<feature type="helix" evidence="6">
    <location>
        <begin position="368"/>
        <end position="379"/>
    </location>
</feature>
<feature type="helix" evidence="6">
    <location>
        <begin position="384"/>
        <end position="397"/>
    </location>
</feature>
<gene>
    <name type="primary">PTAR1</name>
</gene>
<protein>
    <recommendedName>
        <fullName>Protein prenyltransferase alpha subunit repeat-containing protein 1</fullName>
    </recommendedName>
</protein>
<dbReference type="EMBL" id="AL162412">
    <property type="status" value="NOT_ANNOTATED_CDS"/>
    <property type="molecule type" value="Genomic_DNA"/>
</dbReference>
<dbReference type="EMBL" id="BC053622">
    <property type="protein sequence ID" value="AAH53622.1"/>
    <property type="status" value="ALT_INIT"/>
    <property type="molecule type" value="mRNA"/>
</dbReference>
<dbReference type="CCDS" id="CCDS47978.1"/>
<dbReference type="RefSeq" id="NP_001093136.1">
    <property type="nucleotide sequence ID" value="NM_001099666.2"/>
</dbReference>
<dbReference type="PDB" id="6J6X">
    <property type="method" value="X-ray"/>
    <property type="resolution" value="2.96 A"/>
    <property type="chains" value="A=1-339"/>
</dbReference>
<dbReference type="PDB" id="6J74">
    <property type="method" value="X-ray"/>
    <property type="resolution" value="3.21 A"/>
    <property type="chains" value="A=1-327"/>
</dbReference>
<dbReference type="PDB" id="6J7F">
    <property type="method" value="X-ray"/>
    <property type="resolution" value="2.88 A"/>
    <property type="chains" value="A=1-327"/>
</dbReference>
<dbReference type="PDB" id="6J7X">
    <property type="method" value="X-ray"/>
    <property type="resolution" value="2.75 A"/>
    <property type="chains" value="A=1-327"/>
</dbReference>
<dbReference type="PDB" id="6O60">
    <property type="method" value="X-ray"/>
    <property type="resolution" value="2.50 A"/>
    <property type="chains" value="A=1-402"/>
</dbReference>
<dbReference type="PDBsum" id="6J6X"/>
<dbReference type="PDBsum" id="6J74"/>
<dbReference type="PDBsum" id="6J7F"/>
<dbReference type="PDBsum" id="6J7X"/>
<dbReference type="PDBsum" id="6O60"/>
<dbReference type="SMR" id="Q7Z6K3"/>
<dbReference type="BioGRID" id="131995">
    <property type="interactions" value="85"/>
</dbReference>
<dbReference type="FunCoup" id="Q7Z6K3">
    <property type="interactions" value="1213"/>
</dbReference>
<dbReference type="IntAct" id="Q7Z6K3">
    <property type="interactions" value="15"/>
</dbReference>
<dbReference type="MINT" id="Q7Z6K3"/>
<dbReference type="STRING" id="9606.ENSP00000344299"/>
<dbReference type="GlyGen" id="Q7Z6K3">
    <property type="glycosylation" value="1 site, 1 O-linked glycan (1 site)"/>
</dbReference>
<dbReference type="iPTMnet" id="Q7Z6K3"/>
<dbReference type="MetOSite" id="Q7Z6K3"/>
<dbReference type="PhosphoSitePlus" id="Q7Z6K3"/>
<dbReference type="BioMuta" id="PTAR1"/>
<dbReference type="DMDM" id="167012004"/>
<dbReference type="jPOST" id="Q7Z6K3"/>
<dbReference type="MassIVE" id="Q7Z6K3"/>
<dbReference type="PaxDb" id="9606-ENSP00000344299"/>
<dbReference type="PeptideAtlas" id="Q7Z6K3"/>
<dbReference type="ProteomicsDB" id="69433"/>
<dbReference type="Pumba" id="Q7Z6K3"/>
<dbReference type="Antibodypedia" id="6448">
    <property type="antibodies" value="72 antibodies from 18 providers"/>
</dbReference>
<dbReference type="DNASU" id="375743"/>
<dbReference type="Ensembl" id="ENST00000340434.5">
    <property type="protein sequence ID" value="ENSP00000344299.4"/>
    <property type="gene ID" value="ENSG00000188647.13"/>
</dbReference>
<dbReference type="GeneID" id="375743"/>
<dbReference type="KEGG" id="hsa:375743"/>
<dbReference type="MANE-Select" id="ENST00000340434.5">
    <property type="protein sequence ID" value="ENSP00000344299.4"/>
    <property type="RefSeq nucleotide sequence ID" value="NM_001099666.2"/>
    <property type="RefSeq protein sequence ID" value="NP_001093136.1"/>
</dbReference>
<dbReference type="UCSC" id="uc004ahj.5">
    <property type="organism name" value="human"/>
</dbReference>
<dbReference type="AGR" id="HGNC:30449"/>
<dbReference type="CTD" id="375743"/>
<dbReference type="DisGeNET" id="375743"/>
<dbReference type="GeneCards" id="PTAR1"/>
<dbReference type="HGNC" id="HGNC:30449">
    <property type="gene designation" value="PTAR1"/>
</dbReference>
<dbReference type="HPA" id="ENSG00000188647">
    <property type="expression patterns" value="Low tissue specificity"/>
</dbReference>
<dbReference type="MIM" id="621024">
    <property type="type" value="gene"/>
</dbReference>
<dbReference type="neXtProt" id="NX_Q7Z6K3"/>
<dbReference type="OpenTargets" id="ENSG00000188647"/>
<dbReference type="PharmGKB" id="PA134897041"/>
<dbReference type="VEuPathDB" id="HostDB:ENSG00000188647"/>
<dbReference type="eggNOG" id="ENOG502QQUP">
    <property type="taxonomic scope" value="Eukaryota"/>
</dbReference>
<dbReference type="GeneTree" id="ENSGT00390000017892"/>
<dbReference type="HOGENOM" id="CLU_048186_2_0_1"/>
<dbReference type="InParanoid" id="Q7Z6K3"/>
<dbReference type="OMA" id="CCNTEQR"/>
<dbReference type="OrthoDB" id="5358702at2759"/>
<dbReference type="PAN-GO" id="Q7Z6K3">
    <property type="GO annotations" value="2 GO annotations based on evolutionary models"/>
</dbReference>
<dbReference type="PhylomeDB" id="Q7Z6K3"/>
<dbReference type="TreeFam" id="TF324310"/>
<dbReference type="BRENDA" id="2.5.1.60">
    <property type="organism ID" value="2681"/>
</dbReference>
<dbReference type="PathwayCommons" id="Q7Z6K3"/>
<dbReference type="SignaLink" id="Q7Z6K3"/>
<dbReference type="BioGRID-ORCS" id="375743">
    <property type="hits" value="189 hits in 1171 CRISPR screens"/>
</dbReference>
<dbReference type="ChiTaRS" id="PTAR1">
    <property type="organism name" value="human"/>
</dbReference>
<dbReference type="GenomeRNAi" id="375743"/>
<dbReference type="Pharos" id="Q7Z6K3">
    <property type="development level" value="Tdark"/>
</dbReference>
<dbReference type="PRO" id="PR:Q7Z6K3"/>
<dbReference type="Proteomes" id="UP000005640">
    <property type="component" value="Chromosome 9"/>
</dbReference>
<dbReference type="RNAct" id="Q7Z6K3">
    <property type="molecule type" value="protein"/>
</dbReference>
<dbReference type="Bgee" id="ENSG00000188647">
    <property type="expression patterns" value="Expressed in thymus and 194 other cell types or tissues"/>
</dbReference>
<dbReference type="ExpressionAtlas" id="Q7Z6K3">
    <property type="expression patterns" value="baseline and differential"/>
</dbReference>
<dbReference type="GO" id="GO:0005737">
    <property type="term" value="C:cytoplasm"/>
    <property type="evidence" value="ECO:0000318"/>
    <property type="project" value="GO_Central"/>
</dbReference>
<dbReference type="GO" id="GO:0005739">
    <property type="term" value="C:mitochondrion"/>
    <property type="evidence" value="ECO:0006056"/>
    <property type="project" value="FlyBase"/>
</dbReference>
<dbReference type="GO" id="GO:0008318">
    <property type="term" value="F:protein prenyltransferase activity"/>
    <property type="evidence" value="ECO:0007669"/>
    <property type="project" value="InterPro"/>
</dbReference>
<dbReference type="FunFam" id="1.25.40.120:FF:000003">
    <property type="entry name" value="Protein prenyltransferase alpha subunit repeat containing 1"/>
    <property type="match status" value="1"/>
</dbReference>
<dbReference type="Gene3D" id="1.25.40.120">
    <property type="entry name" value="Protein prenylyltransferase"/>
    <property type="match status" value="1"/>
</dbReference>
<dbReference type="InterPro" id="IPR002088">
    <property type="entry name" value="Prenyl_trans_a"/>
</dbReference>
<dbReference type="PANTHER" id="PTHR11129">
    <property type="entry name" value="PROTEIN FARNESYLTRANSFERASE ALPHA SUBUNIT/RAB GERANYLGERANYL TRANSFERASE ALPHA SUBUNIT"/>
    <property type="match status" value="1"/>
</dbReference>
<dbReference type="PANTHER" id="PTHR11129:SF3">
    <property type="entry name" value="PROTEIN PRENYLTRANSFERASE ALPHA SUBUNIT REPEAT-CONTAINING PROTEIN 1"/>
    <property type="match status" value="1"/>
</dbReference>
<dbReference type="Pfam" id="PF01239">
    <property type="entry name" value="PPTA"/>
    <property type="match status" value="4"/>
</dbReference>
<dbReference type="SUPFAM" id="SSF48439">
    <property type="entry name" value="Protein prenylyltransferase"/>
    <property type="match status" value="1"/>
</dbReference>
<dbReference type="PROSITE" id="PS51147">
    <property type="entry name" value="PFTA"/>
    <property type="match status" value="5"/>
</dbReference>